<sequence length="384" mass="42287">MDIADQTFVKKVNQKLLLKEILKNSPISRAKLSEMTGLNKSTVSSQVNTLMKESMVFEIGQGQSSGGRRPVMLVFNKKAGYSVGIDVGVDYINGILTDLEGTIVLDQYRHLESNSPEITKDILIDMIHHFITQMPQSPYGLIGIGICVPGLIDKDQKIVFTPNSNWRDIDLKSSIQEKYNVPVFIENEANAGAYGEKVFGAAKNHDNIIYVSISTGIGIGVIINNHLYRGVSGFSGEMGHMTIDFNGPKCSCGNRGCWELYASEKALLKSLQTKEKKLSYQDIINLAHLNDIGTLNALQNFGFYLGIGLTNILNTFNPQAVILRNSIIESHPMVLNSMRSEVSSRVYSQLGNSYELLPSSLGQNAPALGMSSIVIDHFLDMITM</sequence>
<protein>
    <recommendedName>
        <fullName>Xylose repressor</fullName>
    </recommendedName>
</protein>
<keyword id="KW-0119">Carbohydrate metabolism</keyword>
<keyword id="KW-0238">DNA-binding</keyword>
<keyword id="KW-1185">Reference proteome</keyword>
<keyword id="KW-0678">Repressor</keyword>
<keyword id="KW-0804">Transcription</keyword>
<keyword id="KW-0805">Transcription regulation</keyword>
<keyword id="KW-0859">Xylose metabolism</keyword>
<gene>
    <name type="primary">xylR</name>
    <name type="ordered locus">BSU17590</name>
</gene>
<feature type="chain" id="PRO_0000095710" description="Xylose repressor">
    <location>
        <begin position="1"/>
        <end position="384"/>
    </location>
</feature>
<feature type="DNA-binding region" description="H-T-H motif" evidence="1">
    <location>
        <begin position="29"/>
        <end position="48"/>
    </location>
</feature>
<feature type="sequence conflict" description="In Ref. 1; AAB41092." evidence="2" ref="1">
    <original>L</original>
    <variation>F</variation>
    <location>
        <position position="141"/>
    </location>
</feature>
<feature type="sequence conflict" description="In Ref. 1; AAB41092." evidence="2" ref="1">
    <original>P</original>
    <variation>S</variation>
    <location>
        <position position="182"/>
    </location>
</feature>
<feature type="sequence conflict" description="In Ref. 1; AAB41092." evidence="2" ref="1">
    <original>V</original>
    <variation>L</variation>
    <location>
        <position position="198"/>
    </location>
</feature>
<name>XYLR_BACSU</name>
<dbReference type="EMBL" id="U66480">
    <property type="protein sequence ID" value="AAB41092.1"/>
    <property type="status" value="ALT_INIT"/>
    <property type="molecule type" value="Genomic_DNA"/>
</dbReference>
<dbReference type="EMBL" id="AL009126">
    <property type="protein sequence ID" value="CAB13643.3"/>
    <property type="molecule type" value="Genomic_DNA"/>
</dbReference>
<dbReference type="RefSeq" id="NP_389641.3">
    <property type="nucleotide sequence ID" value="NC_000964.3"/>
</dbReference>
<dbReference type="RefSeq" id="WP_003244935.1">
    <property type="nucleotide sequence ID" value="NZ_OZ025638.1"/>
</dbReference>
<dbReference type="SMR" id="P94490"/>
<dbReference type="FunCoup" id="P94490">
    <property type="interactions" value="112"/>
</dbReference>
<dbReference type="STRING" id="224308.BSU17590"/>
<dbReference type="PaxDb" id="224308-BSU17590"/>
<dbReference type="EnsemblBacteria" id="CAB13643">
    <property type="protein sequence ID" value="CAB13643"/>
    <property type="gene ID" value="BSU_17590"/>
</dbReference>
<dbReference type="GeneID" id="939531"/>
<dbReference type="KEGG" id="bsu:BSU17590"/>
<dbReference type="PATRIC" id="fig|224308.179.peg.1909"/>
<dbReference type="eggNOG" id="COG1940">
    <property type="taxonomic scope" value="Bacteria"/>
</dbReference>
<dbReference type="InParanoid" id="P94490"/>
<dbReference type="OrthoDB" id="9796533at2"/>
<dbReference type="BioCyc" id="BSUB:BSU17590-MONOMER"/>
<dbReference type="Proteomes" id="UP000001570">
    <property type="component" value="Chromosome"/>
</dbReference>
<dbReference type="GO" id="GO:0003677">
    <property type="term" value="F:DNA binding"/>
    <property type="evidence" value="ECO:0007669"/>
    <property type="project" value="UniProtKB-KW"/>
</dbReference>
<dbReference type="GO" id="GO:0042732">
    <property type="term" value="P:D-xylose metabolic process"/>
    <property type="evidence" value="ECO:0007669"/>
    <property type="project" value="UniProtKB-KW"/>
</dbReference>
<dbReference type="CDD" id="cd24076">
    <property type="entry name" value="ASKHA_ATPase_ROK_BsXylR-like"/>
    <property type="match status" value="1"/>
</dbReference>
<dbReference type="Gene3D" id="3.30.420.40">
    <property type="match status" value="2"/>
</dbReference>
<dbReference type="Gene3D" id="1.10.10.10">
    <property type="entry name" value="Winged helix-like DNA-binding domain superfamily/Winged helix DNA-binding domain"/>
    <property type="match status" value="1"/>
</dbReference>
<dbReference type="InterPro" id="IPR043129">
    <property type="entry name" value="ATPase_NBD"/>
</dbReference>
<dbReference type="InterPro" id="IPR000600">
    <property type="entry name" value="ROK"/>
</dbReference>
<dbReference type="InterPro" id="IPR049874">
    <property type="entry name" value="ROK_cs"/>
</dbReference>
<dbReference type="InterPro" id="IPR036388">
    <property type="entry name" value="WH-like_DNA-bd_sf"/>
</dbReference>
<dbReference type="InterPro" id="IPR036390">
    <property type="entry name" value="WH_DNA-bd_sf"/>
</dbReference>
<dbReference type="PANTHER" id="PTHR18964:SF149">
    <property type="entry name" value="BIFUNCTIONAL UDP-N-ACETYLGLUCOSAMINE 2-EPIMERASE_N-ACETYLMANNOSAMINE KINASE"/>
    <property type="match status" value="1"/>
</dbReference>
<dbReference type="PANTHER" id="PTHR18964">
    <property type="entry name" value="ROK (REPRESSOR, ORF, KINASE) FAMILY"/>
    <property type="match status" value="1"/>
</dbReference>
<dbReference type="Pfam" id="PF13412">
    <property type="entry name" value="HTH_24"/>
    <property type="match status" value="1"/>
</dbReference>
<dbReference type="Pfam" id="PF00480">
    <property type="entry name" value="ROK"/>
    <property type="match status" value="1"/>
</dbReference>
<dbReference type="SUPFAM" id="SSF53067">
    <property type="entry name" value="Actin-like ATPase domain"/>
    <property type="match status" value="1"/>
</dbReference>
<dbReference type="SUPFAM" id="SSF46785">
    <property type="entry name" value="Winged helix' DNA-binding domain"/>
    <property type="match status" value="1"/>
</dbReference>
<dbReference type="PROSITE" id="PS01125">
    <property type="entry name" value="ROK"/>
    <property type="match status" value="1"/>
</dbReference>
<reference key="1">
    <citation type="submission" date="1996-08" db="EMBL/GenBank/DDBJ databases">
        <title>Sequencing of a 26 kb region of the Bacillus subtilis genome downstream of spoVJ.</title>
        <authorList>
            <person name="Borchert S."/>
            <person name="Klein C."/>
            <person name="Piksa B."/>
            <person name="Hammelmann M."/>
            <person name="Entian K.-D."/>
        </authorList>
    </citation>
    <scope>NUCLEOTIDE SEQUENCE [GENOMIC DNA]</scope>
</reference>
<reference key="2">
    <citation type="submission" date="1997-02" db="EMBL/GenBank/DDBJ databases">
        <title>Gene expression system.</title>
        <authorList>
            <person name="Hastrup S."/>
        </authorList>
    </citation>
    <scope>NUCLEOTIDE SEQUENCE [GENOMIC DNA]</scope>
</reference>
<reference key="3">
    <citation type="journal article" date="1997" name="Nature">
        <title>The complete genome sequence of the Gram-positive bacterium Bacillus subtilis.</title>
        <authorList>
            <person name="Kunst F."/>
            <person name="Ogasawara N."/>
            <person name="Moszer I."/>
            <person name="Albertini A.M."/>
            <person name="Alloni G."/>
            <person name="Azevedo V."/>
            <person name="Bertero M.G."/>
            <person name="Bessieres P."/>
            <person name="Bolotin A."/>
            <person name="Borchert S."/>
            <person name="Borriss R."/>
            <person name="Boursier L."/>
            <person name="Brans A."/>
            <person name="Braun M."/>
            <person name="Brignell S.C."/>
            <person name="Bron S."/>
            <person name="Brouillet S."/>
            <person name="Bruschi C.V."/>
            <person name="Caldwell B."/>
            <person name="Capuano V."/>
            <person name="Carter N.M."/>
            <person name="Choi S.-K."/>
            <person name="Codani J.-J."/>
            <person name="Connerton I.F."/>
            <person name="Cummings N.J."/>
            <person name="Daniel R.A."/>
            <person name="Denizot F."/>
            <person name="Devine K.M."/>
            <person name="Duesterhoeft A."/>
            <person name="Ehrlich S.D."/>
            <person name="Emmerson P.T."/>
            <person name="Entian K.-D."/>
            <person name="Errington J."/>
            <person name="Fabret C."/>
            <person name="Ferrari E."/>
            <person name="Foulger D."/>
            <person name="Fritz C."/>
            <person name="Fujita M."/>
            <person name="Fujita Y."/>
            <person name="Fuma S."/>
            <person name="Galizzi A."/>
            <person name="Galleron N."/>
            <person name="Ghim S.-Y."/>
            <person name="Glaser P."/>
            <person name="Goffeau A."/>
            <person name="Golightly E.J."/>
            <person name="Grandi G."/>
            <person name="Guiseppi G."/>
            <person name="Guy B.J."/>
            <person name="Haga K."/>
            <person name="Haiech J."/>
            <person name="Harwood C.R."/>
            <person name="Henaut A."/>
            <person name="Hilbert H."/>
            <person name="Holsappel S."/>
            <person name="Hosono S."/>
            <person name="Hullo M.-F."/>
            <person name="Itaya M."/>
            <person name="Jones L.-M."/>
            <person name="Joris B."/>
            <person name="Karamata D."/>
            <person name="Kasahara Y."/>
            <person name="Klaerr-Blanchard M."/>
            <person name="Klein C."/>
            <person name="Kobayashi Y."/>
            <person name="Koetter P."/>
            <person name="Koningstein G."/>
            <person name="Krogh S."/>
            <person name="Kumano M."/>
            <person name="Kurita K."/>
            <person name="Lapidus A."/>
            <person name="Lardinois S."/>
            <person name="Lauber J."/>
            <person name="Lazarevic V."/>
            <person name="Lee S.-M."/>
            <person name="Levine A."/>
            <person name="Liu H."/>
            <person name="Masuda S."/>
            <person name="Mauel C."/>
            <person name="Medigue C."/>
            <person name="Medina N."/>
            <person name="Mellado R.P."/>
            <person name="Mizuno M."/>
            <person name="Moestl D."/>
            <person name="Nakai S."/>
            <person name="Noback M."/>
            <person name="Noone D."/>
            <person name="O'Reilly M."/>
            <person name="Ogawa K."/>
            <person name="Ogiwara A."/>
            <person name="Oudega B."/>
            <person name="Park S.-H."/>
            <person name="Parro V."/>
            <person name="Pohl T.M."/>
            <person name="Portetelle D."/>
            <person name="Porwollik S."/>
            <person name="Prescott A.M."/>
            <person name="Presecan E."/>
            <person name="Pujic P."/>
            <person name="Purnelle B."/>
            <person name="Rapoport G."/>
            <person name="Rey M."/>
            <person name="Reynolds S."/>
            <person name="Rieger M."/>
            <person name="Rivolta C."/>
            <person name="Rocha E."/>
            <person name="Roche B."/>
            <person name="Rose M."/>
            <person name="Sadaie Y."/>
            <person name="Sato T."/>
            <person name="Scanlan E."/>
            <person name="Schleich S."/>
            <person name="Schroeter R."/>
            <person name="Scoffone F."/>
            <person name="Sekiguchi J."/>
            <person name="Sekowska A."/>
            <person name="Seror S.J."/>
            <person name="Serror P."/>
            <person name="Shin B.-S."/>
            <person name="Soldo B."/>
            <person name="Sorokin A."/>
            <person name="Tacconi E."/>
            <person name="Takagi T."/>
            <person name="Takahashi H."/>
            <person name="Takemaru K."/>
            <person name="Takeuchi M."/>
            <person name="Tamakoshi A."/>
            <person name="Tanaka T."/>
            <person name="Terpstra P."/>
            <person name="Tognoni A."/>
            <person name="Tosato V."/>
            <person name="Uchiyama S."/>
            <person name="Vandenbol M."/>
            <person name="Vannier F."/>
            <person name="Vassarotti A."/>
            <person name="Viari A."/>
            <person name="Wambutt R."/>
            <person name="Wedler E."/>
            <person name="Wedler H."/>
            <person name="Weitzenegger T."/>
            <person name="Winters P."/>
            <person name="Wipat A."/>
            <person name="Yamamoto H."/>
            <person name="Yamane K."/>
            <person name="Yasumoto K."/>
            <person name="Yata K."/>
            <person name="Yoshida K."/>
            <person name="Yoshikawa H.-F."/>
            <person name="Zumstein E."/>
            <person name="Yoshikawa H."/>
            <person name="Danchin A."/>
        </authorList>
    </citation>
    <scope>NUCLEOTIDE SEQUENCE [LARGE SCALE GENOMIC DNA]</scope>
    <source>
        <strain>168</strain>
    </source>
</reference>
<reference key="4">
    <citation type="journal article" date="2009" name="Microbiology">
        <title>From a consortium sequence to a unified sequence: the Bacillus subtilis 168 reference genome a decade later.</title>
        <authorList>
            <person name="Barbe V."/>
            <person name="Cruveiller S."/>
            <person name="Kunst F."/>
            <person name="Lenoble P."/>
            <person name="Meurice G."/>
            <person name="Sekowska A."/>
            <person name="Vallenet D."/>
            <person name="Wang T."/>
            <person name="Moszer I."/>
            <person name="Medigue C."/>
            <person name="Danchin A."/>
        </authorList>
    </citation>
    <scope>SEQUENCE REVISION TO 141; 182 AND 198</scope>
</reference>
<proteinExistence type="inferred from homology"/>
<organism>
    <name type="scientific">Bacillus subtilis (strain 168)</name>
    <dbReference type="NCBI Taxonomy" id="224308"/>
    <lineage>
        <taxon>Bacteria</taxon>
        <taxon>Bacillati</taxon>
        <taxon>Bacillota</taxon>
        <taxon>Bacilli</taxon>
        <taxon>Bacillales</taxon>
        <taxon>Bacillaceae</taxon>
        <taxon>Bacillus</taxon>
    </lineage>
</organism>
<evidence type="ECO:0000250" key="1"/>
<evidence type="ECO:0000305" key="2"/>
<comment type="function">
    <text evidence="1">Transcriptional repressor of xylose-utilizing enzymes.</text>
</comment>
<comment type="similarity">
    <text evidence="2">Belongs to the ROK (NagC/XylR) family.</text>
</comment>
<comment type="sequence caution" evidence="2">
    <conflict type="erroneous initiation">
        <sequence resource="EMBL-CDS" id="AAB41092"/>
    </conflict>
    <text>Truncated N-terminus.</text>
</comment>
<accession>P94490</accession>
<accession>Q796H3</accession>